<evidence type="ECO:0000250" key="1"/>
<evidence type="ECO:0000255" key="2"/>
<evidence type="ECO:0000269" key="3">
    <source>
    </source>
</evidence>
<evidence type="ECO:0000269" key="4">
    <source>
    </source>
</evidence>
<evidence type="ECO:0000305" key="5"/>
<name>TI171_ARATH</name>
<dbReference type="EMBL" id="AY463969">
    <property type="protein sequence ID" value="AAR26370.1"/>
    <property type="molecule type" value="mRNA"/>
</dbReference>
<dbReference type="EMBL" id="AC026234">
    <property type="protein sequence ID" value="AAF88154.1"/>
    <property type="molecule type" value="Genomic_DNA"/>
</dbReference>
<dbReference type="EMBL" id="CP002684">
    <property type="protein sequence ID" value="AEE29964.1"/>
    <property type="molecule type" value="Genomic_DNA"/>
</dbReference>
<dbReference type="EMBL" id="AK118449">
    <property type="protein sequence ID" value="BAC43058.1"/>
    <property type="molecule type" value="mRNA"/>
</dbReference>
<dbReference type="EMBL" id="BT005239">
    <property type="protein sequence ID" value="AAO63303.1"/>
    <property type="molecule type" value="mRNA"/>
</dbReference>
<dbReference type="PIR" id="C86337">
    <property type="entry name" value="C86337"/>
</dbReference>
<dbReference type="RefSeq" id="NP_173460.1">
    <property type="nucleotide sequence ID" value="NM_101886.4"/>
</dbReference>
<dbReference type="SMR" id="Q9LN27"/>
<dbReference type="FunCoup" id="Q9LN27">
    <property type="interactions" value="2296"/>
</dbReference>
<dbReference type="STRING" id="3702.Q9LN27"/>
<dbReference type="TCDB" id="3.A.8.1.3">
    <property type="family name" value="the mitochondrial protein translocase (mpt) family"/>
</dbReference>
<dbReference type="PaxDb" id="3702-AT1G20350.1"/>
<dbReference type="EnsemblPlants" id="AT1G20350.1">
    <property type="protein sequence ID" value="AT1G20350.1"/>
    <property type="gene ID" value="AT1G20350"/>
</dbReference>
<dbReference type="GeneID" id="838623"/>
<dbReference type="Gramene" id="AT1G20350.1">
    <property type="protein sequence ID" value="AT1G20350.1"/>
    <property type="gene ID" value="AT1G20350"/>
</dbReference>
<dbReference type="KEGG" id="ath:AT1G20350"/>
<dbReference type="Araport" id="AT1G20350"/>
<dbReference type="TAIR" id="AT1G20350">
    <property type="gene designation" value="TIM17-1"/>
</dbReference>
<dbReference type="eggNOG" id="KOG1652">
    <property type="taxonomic scope" value="Eukaryota"/>
</dbReference>
<dbReference type="HOGENOM" id="CLU_087811_0_0_1"/>
<dbReference type="InParanoid" id="Q9LN27"/>
<dbReference type="OMA" id="WGGLYST"/>
<dbReference type="OrthoDB" id="2261329at2759"/>
<dbReference type="PhylomeDB" id="Q9LN27"/>
<dbReference type="PRO" id="PR:Q9LN27"/>
<dbReference type="Proteomes" id="UP000006548">
    <property type="component" value="Chromosome 1"/>
</dbReference>
<dbReference type="ExpressionAtlas" id="Q9LN27">
    <property type="expression patterns" value="baseline and differential"/>
</dbReference>
<dbReference type="GO" id="GO:0005744">
    <property type="term" value="C:TIM23 mitochondrial import inner membrane translocase complex"/>
    <property type="evidence" value="ECO:0000304"/>
    <property type="project" value="TAIR"/>
</dbReference>
<dbReference type="PANTHER" id="PTHR10485">
    <property type="entry name" value="MITOCHONDRIAL IMPORT INNER MEMBRANE TRANSLOCASE SUBUNIT TIM-17"/>
    <property type="match status" value="1"/>
</dbReference>
<dbReference type="PANTHER" id="PTHR10485:SF28">
    <property type="entry name" value="MITOCHONDRIAL IMPORT INNER MEMBRANE TRANSLOCASE SUBUNIT TIM17-1"/>
    <property type="match status" value="1"/>
</dbReference>
<dbReference type="Pfam" id="PF02466">
    <property type="entry name" value="Tim17"/>
    <property type="match status" value="1"/>
</dbReference>
<protein>
    <recommendedName>
        <fullName>Mitochondrial import inner membrane translocase subunit TIM17-1</fullName>
    </recommendedName>
</protein>
<accession>Q9LN27</accession>
<gene>
    <name type="primary">TIM17-1</name>
    <name type="ordered locus">At1g20350</name>
    <name type="ORF">F14O10.3</name>
    <name type="ORF">F14O10.5</name>
</gene>
<comment type="function">
    <text evidence="1">Essential component of the TIM17:23 complex, a complex that mediates the translocation of transit peptide-containing proteins across the mitochondrial inner membrane. Links the inner and outer membranes (By similarity).</text>
</comment>
<comment type="subunit">
    <text evidence="1">Component of the TIM17:23 complex at least composed of TIM23, TIM17 and TIM50. The complex interacts with the TIM44 component of the PAM complex (By similarity).</text>
</comment>
<comment type="subcellular location">
    <subcellularLocation>
        <location evidence="5">Mitochondrion inner membrane</location>
        <topology evidence="5">Multi-pass membrane protein</topology>
    </subcellularLocation>
</comment>
<comment type="tissue specificity">
    <text evidence="3 4">Expressed in flowers, leaves and cotyledons, and at very low levels in roots.</text>
</comment>
<comment type="induction">
    <text evidence="4">Up-regulated after antimycin A or rotenone treatments.</text>
</comment>
<comment type="similarity">
    <text evidence="5">Belongs to the Tim17/Tim22/Tim23 family.</text>
</comment>
<proteinExistence type="evidence at transcript level"/>
<organism>
    <name type="scientific">Arabidopsis thaliana</name>
    <name type="common">Mouse-ear cress</name>
    <dbReference type="NCBI Taxonomy" id="3702"/>
    <lineage>
        <taxon>Eukaryota</taxon>
        <taxon>Viridiplantae</taxon>
        <taxon>Streptophyta</taxon>
        <taxon>Embryophyta</taxon>
        <taxon>Tracheophyta</taxon>
        <taxon>Spermatophyta</taxon>
        <taxon>Magnoliopsida</taxon>
        <taxon>eudicotyledons</taxon>
        <taxon>Gunneridae</taxon>
        <taxon>Pentapetalae</taxon>
        <taxon>rosids</taxon>
        <taxon>malvids</taxon>
        <taxon>Brassicales</taxon>
        <taxon>Brassicaceae</taxon>
        <taxon>Camelineae</taxon>
        <taxon>Arabidopsis</taxon>
    </lineage>
</organism>
<reference key="1">
    <citation type="journal article" date="2003" name="Plant Physiol.">
        <title>Identification, expression, and import of components 17 and 23 of the inner mitochondrial membrane translocase from Arabidopsis.</title>
        <authorList>
            <person name="Murcha M.W."/>
            <person name="Lister R."/>
            <person name="Ho A.Y."/>
            <person name="Whelan J."/>
        </authorList>
    </citation>
    <scope>NUCLEOTIDE SEQUENCE [MRNA]</scope>
    <scope>TISSUE SPECIFICITY</scope>
    <scope>SUBCELLULAR LOCATION</scope>
</reference>
<reference key="2">
    <citation type="journal article" date="2000" name="Nature">
        <title>Sequence and analysis of chromosome 1 of the plant Arabidopsis thaliana.</title>
        <authorList>
            <person name="Theologis A."/>
            <person name="Ecker J.R."/>
            <person name="Palm C.J."/>
            <person name="Federspiel N.A."/>
            <person name="Kaul S."/>
            <person name="White O."/>
            <person name="Alonso J."/>
            <person name="Altafi H."/>
            <person name="Araujo R."/>
            <person name="Bowman C.L."/>
            <person name="Brooks S.Y."/>
            <person name="Buehler E."/>
            <person name="Chan A."/>
            <person name="Chao Q."/>
            <person name="Chen H."/>
            <person name="Cheuk R.F."/>
            <person name="Chin C.W."/>
            <person name="Chung M.K."/>
            <person name="Conn L."/>
            <person name="Conway A.B."/>
            <person name="Conway A.R."/>
            <person name="Creasy T.H."/>
            <person name="Dewar K."/>
            <person name="Dunn P."/>
            <person name="Etgu P."/>
            <person name="Feldblyum T.V."/>
            <person name="Feng J.-D."/>
            <person name="Fong B."/>
            <person name="Fujii C.Y."/>
            <person name="Gill J.E."/>
            <person name="Goldsmith A.D."/>
            <person name="Haas B."/>
            <person name="Hansen N.F."/>
            <person name="Hughes B."/>
            <person name="Huizar L."/>
            <person name="Hunter J.L."/>
            <person name="Jenkins J."/>
            <person name="Johnson-Hopson C."/>
            <person name="Khan S."/>
            <person name="Khaykin E."/>
            <person name="Kim C.J."/>
            <person name="Koo H.L."/>
            <person name="Kremenetskaia I."/>
            <person name="Kurtz D.B."/>
            <person name="Kwan A."/>
            <person name="Lam B."/>
            <person name="Langin-Hooper S."/>
            <person name="Lee A."/>
            <person name="Lee J.M."/>
            <person name="Lenz C.A."/>
            <person name="Li J.H."/>
            <person name="Li Y.-P."/>
            <person name="Lin X."/>
            <person name="Liu S.X."/>
            <person name="Liu Z.A."/>
            <person name="Luros J.S."/>
            <person name="Maiti R."/>
            <person name="Marziali A."/>
            <person name="Militscher J."/>
            <person name="Miranda M."/>
            <person name="Nguyen M."/>
            <person name="Nierman W.C."/>
            <person name="Osborne B.I."/>
            <person name="Pai G."/>
            <person name="Peterson J."/>
            <person name="Pham P.K."/>
            <person name="Rizzo M."/>
            <person name="Rooney T."/>
            <person name="Rowley D."/>
            <person name="Sakano H."/>
            <person name="Salzberg S.L."/>
            <person name="Schwartz J.R."/>
            <person name="Shinn P."/>
            <person name="Southwick A.M."/>
            <person name="Sun H."/>
            <person name="Tallon L.J."/>
            <person name="Tambunga G."/>
            <person name="Toriumi M.J."/>
            <person name="Town C.D."/>
            <person name="Utterback T."/>
            <person name="Van Aken S."/>
            <person name="Vaysberg M."/>
            <person name="Vysotskaia V.S."/>
            <person name="Walker M."/>
            <person name="Wu D."/>
            <person name="Yu G."/>
            <person name="Fraser C.M."/>
            <person name="Venter J.C."/>
            <person name="Davis R.W."/>
        </authorList>
    </citation>
    <scope>NUCLEOTIDE SEQUENCE [LARGE SCALE GENOMIC DNA]</scope>
    <source>
        <strain>cv. Columbia</strain>
    </source>
</reference>
<reference key="3">
    <citation type="journal article" date="2017" name="Plant J.">
        <title>Araport11: a complete reannotation of the Arabidopsis thaliana reference genome.</title>
        <authorList>
            <person name="Cheng C.Y."/>
            <person name="Krishnakumar V."/>
            <person name="Chan A.P."/>
            <person name="Thibaud-Nissen F."/>
            <person name="Schobel S."/>
            <person name="Town C.D."/>
        </authorList>
    </citation>
    <scope>GENOME REANNOTATION</scope>
    <source>
        <strain>cv. Columbia</strain>
    </source>
</reference>
<reference key="4">
    <citation type="journal article" date="2002" name="Science">
        <title>Functional annotation of a full-length Arabidopsis cDNA collection.</title>
        <authorList>
            <person name="Seki M."/>
            <person name="Narusaka M."/>
            <person name="Kamiya A."/>
            <person name="Ishida J."/>
            <person name="Satou M."/>
            <person name="Sakurai T."/>
            <person name="Nakajima M."/>
            <person name="Enju A."/>
            <person name="Akiyama K."/>
            <person name="Oono Y."/>
            <person name="Muramatsu M."/>
            <person name="Hayashizaki Y."/>
            <person name="Kawai J."/>
            <person name="Carninci P."/>
            <person name="Itoh M."/>
            <person name="Ishii Y."/>
            <person name="Arakawa T."/>
            <person name="Shibata K."/>
            <person name="Shinagawa A."/>
            <person name="Shinozaki K."/>
        </authorList>
    </citation>
    <scope>NUCLEOTIDE SEQUENCE [LARGE SCALE MRNA]</scope>
    <source>
        <strain>cv. Columbia</strain>
    </source>
</reference>
<reference key="5">
    <citation type="journal article" date="2003" name="Science">
        <title>Empirical analysis of transcriptional activity in the Arabidopsis genome.</title>
        <authorList>
            <person name="Yamada K."/>
            <person name="Lim J."/>
            <person name="Dale J.M."/>
            <person name="Chen H."/>
            <person name="Shinn P."/>
            <person name="Palm C.J."/>
            <person name="Southwick A.M."/>
            <person name="Wu H.C."/>
            <person name="Kim C.J."/>
            <person name="Nguyen M."/>
            <person name="Pham P.K."/>
            <person name="Cheuk R.F."/>
            <person name="Karlin-Newmann G."/>
            <person name="Liu S.X."/>
            <person name="Lam B."/>
            <person name="Sakano H."/>
            <person name="Wu T."/>
            <person name="Yu G."/>
            <person name="Miranda M."/>
            <person name="Quach H.L."/>
            <person name="Tripp M."/>
            <person name="Chang C.H."/>
            <person name="Lee J.M."/>
            <person name="Toriumi M.J."/>
            <person name="Chan M.M."/>
            <person name="Tang C.C."/>
            <person name="Onodera C.S."/>
            <person name="Deng J.M."/>
            <person name="Akiyama K."/>
            <person name="Ansari Y."/>
            <person name="Arakawa T."/>
            <person name="Banh J."/>
            <person name="Banno F."/>
            <person name="Bowser L."/>
            <person name="Brooks S.Y."/>
            <person name="Carninci P."/>
            <person name="Chao Q."/>
            <person name="Choy N."/>
            <person name="Enju A."/>
            <person name="Goldsmith A.D."/>
            <person name="Gurjal M."/>
            <person name="Hansen N.F."/>
            <person name="Hayashizaki Y."/>
            <person name="Johnson-Hopson C."/>
            <person name="Hsuan V.W."/>
            <person name="Iida K."/>
            <person name="Karnes M."/>
            <person name="Khan S."/>
            <person name="Koesema E."/>
            <person name="Ishida J."/>
            <person name="Jiang P.X."/>
            <person name="Jones T."/>
            <person name="Kawai J."/>
            <person name="Kamiya A."/>
            <person name="Meyers C."/>
            <person name="Nakajima M."/>
            <person name="Narusaka M."/>
            <person name="Seki M."/>
            <person name="Sakurai T."/>
            <person name="Satou M."/>
            <person name="Tamse R."/>
            <person name="Vaysberg M."/>
            <person name="Wallender E.K."/>
            <person name="Wong C."/>
            <person name="Yamamura Y."/>
            <person name="Yuan S."/>
            <person name="Shinozaki K."/>
            <person name="Davis R.W."/>
            <person name="Theologis A."/>
            <person name="Ecker J.R."/>
        </authorList>
    </citation>
    <scope>NUCLEOTIDE SEQUENCE [LARGE SCALE MRNA]</scope>
    <source>
        <strain>cv. Columbia</strain>
    </source>
</reference>
<reference key="6">
    <citation type="journal article" date="2004" name="Plant Physiol.">
        <title>A transcriptomic and proteomic characterization of the Arabidopsis mitochondrial protein import apparatus and its response to mitochondrial dysfunction.</title>
        <authorList>
            <person name="Lister R."/>
            <person name="Chew O."/>
            <person name="Lee M.N."/>
            <person name="Heazlewood J.L."/>
            <person name="Clifton R."/>
            <person name="Parker K.L."/>
            <person name="Millar A.H."/>
            <person name="Whelan J."/>
        </authorList>
    </citation>
    <scope>TISSUE SPECIFICITY</scope>
    <scope>INDUCTION</scope>
</reference>
<reference key="7">
    <citation type="journal article" date="2007" name="Plant Physiol.">
        <title>Characterization of the preprotein and amino acid transporter gene family in Arabidopsis.</title>
        <authorList>
            <person name="Murcha M.W."/>
            <person name="Elhafez D."/>
            <person name="Lister R."/>
            <person name="Tonti-Filippini J."/>
            <person name="Baumgartner M."/>
            <person name="Philippar K."/>
            <person name="Carrie C."/>
            <person name="Mokranjac D."/>
            <person name="Soll J."/>
            <person name="Whelan J."/>
        </authorList>
    </citation>
    <scope>SUBCELLULAR LOCATION</scope>
</reference>
<sequence>MGTPESSREPCPDRILDDVGGAFAMGAVGGSAYHLIRGIYNSPGGARLSGGVQALRMSGPRSGGSFSVWGGLYSTFDCALVYARQKEDPWNSILSGAATGGFLSLRQGLGASARSALVGGVLLAMIEGVGIMLNKVQSTAHNEQFMEDHAATSLPYGMGQISGQSVPVPETSSSSSGSVSWFGSLFKKKKETEDHHSESRTHILESFDAPPVPTYEFK</sequence>
<feature type="chain" id="PRO_0000420932" description="Mitochondrial import inner membrane translocase subunit TIM17-1">
    <location>
        <begin position="1"/>
        <end position="218"/>
    </location>
</feature>
<feature type="transmembrane region" description="Helical" evidence="2">
    <location>
        <begin position="19"/>
        <end position="36"/>
    </location>
</feature>
<feature type="transmembrane region" description="Helical" evidence="2">
    <location>
        <begin position="66"/>
        <end position="82"/>
    </location>
</feature>
<feature type="transmembrane region" description="Helical" evidence="2">
    <location>
        <begin position="89"/>
        <end position="105"/>
    </location>
</feature>
<feature type="transmembrane region" description="Helical" evidence="2">
    <location>
        <begin position="116"/>
        <end position="133"/>
    </location>
</feature>
<keyword id="KW-0472">Membrane</keyword>
<keyword id="KW-0496">Mitochondrion</keyword>
<keyword id="KW-0999">Mitochondrion inner membrane</keyword>
<keyword id="KW-1185">Reference proteome</keyword>
<keyword id="KW-0812">Transmembrane</keyword>
<keyword id="KW-1133">Transmembrane helix</keyword>